<organism>
    <name type="scientific">Shewanella oneidensis (strain ATCC 700550 / JCM 31522 / CIP 106686 / LMG 19005 / NCIMB 14063 / MR-1)</name>
    <dbReference type="NCBI Taxonomy" id="211586"/>
    <lineage>
        <taxon>Bacteria</taxon>
        <taxon>Pseudomonadati</taxon>
        <taxon>Pseudomonadota</taxon>
        <taxon>Gammaproteobacteria</taxon>
        <taxon>Alteromonadales</taxon>
        <taxon>Shewanellaceae</taxon>
        <taxon>Shewanella</taxon>
    </lineage>
</organism>
<keyword id="KW-1185">Reference proteome</keyword>
<name>Y2575_SHEON</name>
<sequence length="92" mass="10452">MLCAVYKSSRKADTYLFVNKRDCFDDVPQALLDMFGVPQLVMVFPIVKRESLGIADINKVRAALEEKGFYLQIPPPQVNLLAEHRENLGIKD</sequence>
<gene>
    <name type="ordered locus">SO_2575</name>
</gene>
<protein>
    <recommendedName>
        <fullName evidence="1">YcgL domain-containing protein SO_2575</fullName>
    </recommendedName>
</protein>
<feature type="chain" id="PRO_0000375372" description="YcgL domain-containing protein SO_2575">
    <location>
        <begin position="1"/>
        <end position="92"/>
    </location>
</feature>
<feature type="domain" description="YcgL" evidence="1">
    <location>
        <begin position="1"/>
        <end position="85"/>
    </location>
</feature>
<reference key="1">
    <citation type="journal article" date="2002" name="Nat. Biotechnol.">
        <title>Genome sequence of the dissimilatory metal ion-reducing bacterium Shewanella oneidensis.</title>
        <authorList>
            <person name="Heidelberg J.F."/>
            <person name="Paulsen I.T."/>
            <person name="Nelson K.E."/>
            <person name="Gaidos E.J."/>
            <person name="Nelson W.C."/>
            <person name="Read T.D."/>
            <person name="Eisen J.A."/>
            <person name="Seshadri R."/>
            <person name="Ward N.L."/>
            <person name="Methe B.A."/>
            <person name="Clayton R.A."/>
            <person name="Meyer T."/>
            <person name="Tsapin A."/>
            <person name="Scott J."/>
            <person name="Beanan M.J."/>
            <person name="Brinkac L.M."/>
            <person name="Daugherty S.C."/>
            <person name="DeBoy R.T."/>
            <person name="Dodson R.J."/>
            <person name="Durkin A.S."/>
            <person name="Haft D.H."/>
            <person name="Kolonay J.F."/>
            <person name="Madupu R."/>
            <person name="Peterson J.D."/>
            <person name="Umayam L.A."/>
            <person name="White O."/>
            <person name="Wolf A.M."/>
            <person name="Vamathevan J.J."/>
            <person name="Weidman J.F."/>
            <person name="Impraim M."/>
            <person name="Lee K."/>
            <person name="Berry K.J."/>
            <person name="Lee C."/>
            <person name="Mueller J."/>
            <person name="Khouri H.M."/>
            <person name="Gill J."/>
            <person name="Utterback T.R."/>
            <person name="McDonald L.A."/>
            <person name="Feldblyum T.V."/>
            <person name="Smith H.O."/>
            <person name="Venter J.C."/>
            <person name="Nealson K.H."/>
            <person name="Fraser C.M."/>
        </authorList>
    </citation>
    <scope>NUCLEOTIDE SEQUENCE [LARGE SCALE GENOMIC DNA]</scope>
    <source>
        <strain>ATCC 700550 / JCM 31522 / CIP 106686 / LMG 19005 / NCIMB 14063 / MR-1</strain>
    </source>
</reference>
<dbReference type="EMBL" id="AE014299">
    <property type="protein sequence ID" value="AAN55605.1"/>
    <property type="molecule type" value="Genomic_DNA"/>
</dbReference>
<dbReference type="RefSeq" id="NP_718161.1">
    <property type="nucleotide sequence ID" value="NC_004347.2"/>
</dbReference>
<dbReference type="RefSeq" id="WP_011072526.1">
    <property type="nucleotide sequence ID" value="NZ_CP053946.1"/>
</dbReference>
<dbReference type="SMR" id="Q8EE15"/>
<dbReference type="STRING" id="211586.SO_2575"/>
<dbReference type="PaxDb" id="211586-SO_2575"/>
<dbReference type="KEGG" id="son:SO_2575"/>
<dbReference type="PATRIC" id="fig|211586.12.peg.2479"/>
<dbReference type="eggNOG" id="COG3100">
    <property type="taxonomic scope" value="Bacteria"/>
</dbReference>
<dbReference type="HOGENOM" id="CLU_155118_1_0_6"/>
<dbReference type="OrthoDB" id="7062382at2"/>
<dbReference type="PhylomeDB" id="Q8EE15"/>
<dbReference type="BioCyc" id="SONE211586:G1GMP-2360-MONOMER"/>
<dbReference type="Proteomes" id="UP000008186">
    <property type="component" value="Chromosome"/>
</dbReference>
<dbReference type="Gene3D" id="3.10.510.20">
    <property type="entry name" value="YcgL domain"/>
    <property type="match status" value="1"/>
</dbReference>
<dbReference type="HAMAP" id="MF_01866">
    <property type="entry name" value="UPF0745"/>
    <property type="match status" value="1"/>
</dbReference>
<dbReference type="InterPro" id="IPR038068">
    <property type="entry name" value="YcgL-like_sf"/>
</dbReference>
<dbReference type="InterPro" id="IPR027354">
    <property type="entry name" value="YcgL_dom"/>
</dbReference>
<dbReference type="PANTHER" id="PTHR38109">
    <property type="entry name" value="PROTEIN YCGL"/>
    <property type="match status" value="1"/>
</dbReference>
<dbReference type="PANTHER" id="PTHR38109:SF1">
    <property type="entry name" value="PROTEIN YCGL"/>
    <property type="match status" value="1"/>
</dbReference>
<dbReference type="Pfam" id="PF05166">
    <property type="entry name" value="YcgL"/>
    <property type="match status" value="1"/>
</dbReference>
<dbReference type="SUPFAM" id="SSF160191">
    <property type="entry name" value="YcgL-like"/>
    <property type="match status" value="1"/>
</dbReference>
<dbReference type="PROSITE" id="PS51648">
    <property type="entry name" value="YCGL"/>
    <property type="match status" value="1"/>
</dbReference>
<evidence type="ECO:0000255" key="1">
    <source>
        <dbReference type="HAMAP-Rule" id="MF_01866"/>
    </source>
</evidence>
<accession>Q8EE15</accession>
<proteinExistence type="inferred from homology"/>